<feature type="chain" id="PRO_1000054265" description="Multifunctional CCA protein">
    <location>
        <begin position="1"/>
        <end position="415"/>
    </location>
</feature>
<feature type="domain" description="HD" evidence="1">
    <location>
        <begin position="228"/>
        <end position="329"/>
    </location>
</feature>
<feature type="binding site" evidence="1">
    <location>
        <position position="8"/>
    </location>
    <ligand>
        <name>ATP</name>
        <dbReference type="ChEBI" id="CHEBI:30616"/>
    </ligand>
</feature>
<feature type="binding site" evidence="1">
    <location>
        <position position="8"/>
    </location>
    <ligand>
        <name>CTP</name>
        <dbReference type="ChEBI" id="CHEBI:37563"/>
    </ligand>
</feature>
<feature type="binding site" evidence="1">
    <location>
        <position position="11"/>
    </location>
    <ligand>
        <name>ATP</name>
        <dbReference type="ChEBI" id="CHEBI:30616"/>
    </ligand>
</feature>
<feature type="binding site" evidence="1">
    <location>
        <position position="11"/>
    </location>
    <ligand>
        <name>CTP</name>
        <dbReference type="ChEBI" id="CHEBI:37563"/>
    </ligand>
</feature>
<feature type="binding site" evidence="1">
    <location>
        <position position="21"/>
    </location>
    <ligand>
        <name>Mg(2+)</name>
        <dbReference type="ChEBI" id="CHEBI:18420"/>
    </ligand>
</feature>
<feature type="binding site" evidence="1">
    <location>
        <position position="23"/>
    </location>
    <ligand>
        <name>Mg(2+)</name>
        <dbReference type="ChEBI" id="CHEBI:18420"/>
    </ligand>
</feature>
<feature type="binding site" evidence="1">
    <location>
        <position position="91"/>
    </location>
    <ligand>
        <name>ATP</name>
        <dbReference type="ChEBI" id="CHEBI:30616"/>
    </ligand>
</feature>
<feature type="binding site" evidence="1">
    <location>
        <position position="91"/>
    </location>
    <ligand>
        <name>CTP</name>
        <dbReference type="ChEBI" id="CHEBI:37563"/>
    </ligand>
</feature>
<feature type="binding site" evidence="1">
    <location>
        <position position="137"/>
    </location>
    <ligand>
        <name>ATP</name>
        <dbReference type="ChEBI" id="CHEBI:30616"/>
    </ligand>
</feature>
<feature type="binding site" evidence="1">
    <location>
        <position position="137"/>
    </location>
    <ligand>
        <name>CTP</name>
        <dbReference type="ChEBI" id="CHEBI:37563"/>
    </ligand>
</feature>
<feature type="binding site" evidence="1">
    <location>
        <position position="140"/>
    </location>
    <ligand>
        <name>ATP</name>
        <dbReference type="ChEBI" id="CHEBI:30616"/>
    </ligand>
</feature>
<feature type="binding site" evidence="1">
    <location>
        <position position="140"/>
    </location>
    <ligand>
        <name>CTP</name>
        <dbReference type="ChEBI" id="CHEBI:37563"/>
    </ligand>
</feature>
<gene>
    <name evidence="1" type="primary">cca</name>
    <name type="ordered locus">ESA_00362</name>
</gene>
<reference key="1">
    <citation type="journal article" date="2010" name="PLoS ONE">
        <title>Genome sequence of Cronobacter sakazakii BAA-894 and comparative genomic hybridization analysis with other Cronobacter species.</title>
        <authorList>
            <person name="Kucerova E."/>
            <person name="Clifton S.W."/>
            <person name="Xia X.Q."/>
            <person name="Long F."/>
            <person name="Porwollik S."/>
            <person name="Fulton L."/>
            <person name="Fronick C."/>
            <person name="Minx P."/>
            <person name="Kyung K."/>
            <person name="Warren W."/>
            <person name="Fulton R."/>
            <person name="Feng D."/>
            <person name="Wollam A."/>
            <person name="Shah N."/>
            <person name="Bhonagiri V."/>
            <person name="Nash W.E."/>
            <person name="Hallsworth-Pepin K."/>
            <person name="Wilson R.K."/>
            <person name="McClelland M."/>
            <person name="Forsythe S.J."/>
        </authorList>
    </citation>
    <scope>NUCLEOTIDE SEQUENCE [LARGE SCALE GENOMIC DNA]</scope>
    <source>
        <strain>ATCC BAA-894</strain>
    </source>
</reference>
<dbReference type="EC" id="2.7.7.72" evidence="1"/>
<dbReference type="EC" id="3.1.3.-" evidence="1"/>
<dbReference type="EC" id="3.1.4.-" evidence="1"/>
<dbReference type="EMBL" id="CP000783">
    <property type="protein sequence ID" value="ABU75660.1"/>
    <property type="molecule type" value="Genomic_DNA"/>
</dbReference>
<dbReference type="RefSeq" id="WP_012123809.1">
    <property type="nucleotide sequence ID" value="NC_009778.1"/>
</dbReference>
<dbReference type="SMR" id="A7MJU1"/>
<dbReference type="KEGG" id="esa:ESA_00362"/>
<dbReference type="PATRIC" id="fig|290339.8.peg.324"/>
<dbReference type="HOGENOM" id="CLU_015961_1_1_6"/>
<dbReference type="Proteomes" id="UP000000260">
    <property type="component" value="Chromosome"/>
</dbReference>
<dbReference type="GO" id="GO:0005524">
    <property type="term" value="F:ATP binding"/>
    <property type="evidence" value="ECO:0007669"/>
    <property type="project" value="UniProtKB-UniRule"/>
</dbReference>
<dbReference type="GO" id="GO:0004810">
    <property type="term" value="F:CCA tRNA nucleotidyltransferase activity"/>
    <property type="evidence" value="ECO:0007669"/>
    <property type="project" value="UniProtKB-UniRule"/>
</dbReference>
<dbReference type="GO" id="GO:0004112">
    <property type="term" value="F:cyclic-nucleotide phosphodiesterase activity"/>
    <property type="evidence" value="ECO:0007669"/>
    <property type="project" value="UniProtKB-UniRule"/>
</dbReference>
<dbReference type="GO" id="GO:0000287">
    <property type="term" value="F:magnesium ion binding"/>
    <property type="evidence" value="ECO:0007669"/>
    <property type="project" value="UniProtKB-UniRule"/>
</dbReference>
<dbReference type="GO" id="GO:0016791">
    <property type="term" value="F:phosphatase activity"/>
    <property type="evidence" value="ECO:0007669"/>
    <property type="project" value="UniProtKB-UniRule"/>
</dbReference>
<dbReference type="GO" id="GO:0000049">
    <property type="term" value="F:tRNA binding"/>
    <property type="evidence" value="ECO:0007669"/>
    <property type="project" value="UniProtKB-UniRule"/>
</dbReference>
<dbReference type="GO" id="GO:0042245">
    <property type="term" value="P:RNA repair"/>
    <property type="evidence" value="ECO:0007669"/>
    <property type="project" value="UniProtKB-KW"/>
</dbReference>
<dbReference type="GO" id="GO:0001680">
    <property type="term" value="P:tRNA 3'-terminal CCA addition"/>
    <property type="evidence" value="ECO:0007669"/>
    <property type="project" value="UniProtKB-UniRule"/>
</dbReference>
<dbReference type="CDD" id="cd00077">
    <property type="entry name" value="HDc"/>
    <property type="match status" value="1"/>
</dbReference>
<dbReference type="CDD" id="cd05398">
    <property type="entry name" value="NT_ClassII-CCAase"/>
    <property type="match status" value="1"/>
</dbReference>
<dbReference type="FunFam" id="1.10.3090.10:FF:000001">
    <property type="entry name" value="Multifunctional CCA protein"/>
    <property type="match status" value="1"/>
</dbReference>
<dbReference type="FunFam" id="3.30.460.10:FF:000016">
    <property type="entry name" value="Multifunctional CCA protein"/>
    <property type="match status" value="1"/>
</dbReference>
<dbReference type="Gene3D" id="3.30.460.10">
    <property type="entry name" value="Beta Polymerase, domain 2"/>
    <property type="match status" value="1"/>
</dbReference>
<dbReference type="Gene3D" id="1.10.3090.10">
    <property type="entry name" value="cca-adding enzyme, domain 2"/>
    <property type="match status" value="1"/>
</dbReference>
<dbReference type="HAMAP" id="MF_01261">
    <property type="entry name" value="CCA_bact_type1"/>
    <property type="match status" value="1"/>
</dbReference>
<dbReference type="HAMAP" id="MF_01262">
    <property type="entry name" value="CCA_bact_type2"/>
    <property type="match status" value="1"/>
</dbReference>
<dbReference type="InterPro" id="IPR012006">
    <property type="entry name" value="CCA_bact"/>
</dbReference>
<dbReference type="InterPro" id="IPR003607">
    <property type="entry name" value="HD/PDEase_dom"/>
</dbReference>
<dbReference type="InterPro" id="IPR006674">
    <property type="entry name" value="HD_domain"/>
</dbReference>
<dbReference type="InterPro" id="IPR043519">
    <property type="entry name" value="NT_sf"/>
</dbReference>
<dbReference type="InterPro" id="IPR002646">
    <property type="entry name" value="PolA_pol_head_dom"/>
</dbReference>
<dbReference type="InterPro" id="IPR032828">
    <property type="entry name" value="PolyA_RNA-bd"/>
</dbReference>
<dbReference type="InterPro" id="IPR050124">
    <property type="entry name" value="tRNA_CCA-adding_enzyme"/>
</dbReference>
<dbReference type="NCBIfam" id="NF008137">
    <property type="entry name" value="PRK10885.1"/>
    <property type="match status" value="1"/>
</dbReference>
<dbReference type="PANTHER" id="PTHR47545">
    <property type="entry name" value="MULTIFUNCTIONAL CCA PROTEIN"/>
    <property type="match status" value="1"/>
</dbReference>
<dbReference type="PANTHER" id="PTHR47545:SF1">
    <property type="entry name" value="MULTIFUNCTIONAL CCA PROTEIN"/>
    <property type="match status" value="1"/>
</dbReference>
<dbReference type="Pfam" id="PF01966">
    <property type="entry name" value="HD"/>
    <property type="match status" value="1"/>
</dbReference>
<dbReference type="Pfam" id="PF01743">
    <property type="entry name" value="PolyA_pol"/>
    <property type="match status" value="1"/>
</dbReference>
<dbReference type="Pfam" id="PF12627">
    <property type="entry name" value="PolyA_pol_RNAbd"/>
    <property type="match status" value="1"/>
</dbReference>
<dbReference type="PIRSF" id="PIRSF000813">
    <property type="entry name" value="CCA_bact"/>
    <property type="match status" value="1"/>
</dbReference>
<dbReference type="SMART" id="SM00471">
    <property type="entry name" value="HDc"/>
    <property type="match status" value="1"/>
</dbReference>
<dbReference type="SUPFAM" id="SSF81301">
    <property type="entry name" value="Nucleotidyltransferase"/>
    <property type="match status" value="1"/>
</dbReference>
<dbReference type="SUPFAM" id="SSF81891">
    <property type="entry name" value="Poly A polymerase C-terminal region-like"/>
    <property type="match status" value="1"/>
</dbReference>
<dbReference type="PROSITE" id="PS51831">
    <property type="entry name" value="HD"/>
    <property type="match status" value="1"/>
</dbReference>
<evidence type="ECO:0000255" key="1">
    <source>
        <dbReference type="HAMAP-Rule" id="MF_01261"/>
    </source>
</evidence>
<name>CCA_CROS8</name>
<protein>
    <recommendedName>
        <fullName evidence="1">Multifunctional CCA protein</fullName>
    </recommendedName>
    <domain>
        <recommendedName>
            <fullName evidence="1">CCA-adding enzyme</fullName>
            <ecNumber evidence="1">2.7.7.72</ecNumber>
        </recommendedName>
        <alternativeName>
            <fullName evidence="1">CCA tRNA nucleotidyltransferase</fullName>
        </alternativeName>
        <alternativeName>
            <fullName evidence="1">tRNA CCA-pyrophosphorylase</fullName>
        </alternativeName>
        <alternativeName>
            <fullName evidence="1">tRNA adenylyl-/cytidylyl-transferase</fullName>
        </alternativeName>
        <alternativeName>
            <fullName evidence="1">tRNA nucleotidyltransferase</fullName>
        </alternativeName>
        <alternativeName>
            <fullName evidence="1">tRNA-NT</fullName>
        </alternativeName>
    </domain>
    <domain>
        <recommendedName>
            <fullName evidence="1">2'-nucleotidase</fullName>
            <ecNumber evidence="1">3.1.3.-</ecNumber>
        </recommendedName>
    </domain>
    <domain>
        <recommendedName>
            <fullName evidence="1">2',3'-cyclic phosphodiesterase</fullName>
            <ecNumber evidence="1">3.1.4.-</ecNumber>
        </recommendedName>
    </domain>
    <domain>
        <recommendedName>
            <fullName evidence="1">Phosphatase</fullName>
            <ecNumber evidence="1">3.1.3.-</ecNumber>
        </recommendedName>
    </domain>
</protein>
<keyword id="KW-0067">ATP-binding</keyword>
<keyword id="KW-0378">Hydrolase</keyword>
<keyword id="KW-0460">Magnesium</keyword>
<keyword id="KW-0479">Metal-binding</keyword>
<keyword id="KW-0511">Multifunctional enzyme</keyword>
<keyword id="KW-0533">Nickel</keyword>
<keyword id="KW-0547">Nucleotide-binding</keyword>
<keyword id="KW-0548">Nucleotidyltransferase</keyword>
<keyword id="KW-1185">Reference proteome</keyword>
<keyword id="KW-0692">RNA repair</keyword>
<keyword id="KW-0694">RNA-binding</keyword>
<keyword id="KW-0808">Transferase</keyword>
<keyword id="KW-0819">tRNA processing</keyword>
<proteinExistence type="inferred from homology"/>
<accession>A7MJU1</accession>
<organism>
    <name type="scientific">Cronobacter sakazakii (strain ATCC BAA-894)</name>
    <name type="common">Enterobacter sakazakii</name>
    <dbReference type="NCBI Taxonomy" id="290339"/>
    <lineage>
        <taxon>Bacteria</taxon>
        <taxon>Pseudomonadati</taxon>
        <taxon>Pseudomonadota</taxon>
        <taxon>Gammaproteobacteria</taxon>
        <taxon>Enterobacterales</taxon>
        <taxon>Enterobacteriaceae</taxon>
        <taxon>Cronobacter</taxon>
    </lineage>
</organism>
<comment type="function">
    <text evidence="1">Catalyzes the addition and repair of the essential 3'-terminal CCA sequence in tRNAs without using a nucleic acid template. Adds these three nucleotides in the order of C, C, and A to the tRNA nucleotide-73, using CTP and ATP as substrates and producing inorganic pyrophosphate. tRNA 3'-terminal CCA addition is required both for tRNA processing and repair. Also involved in tRNA surveillance by mediating tandem CCA addition to generate a CCACCA at the 3' terminus of unstable tRNAs. While stable tRNAs receive only 3'-terminal CCA, unstable tRNAs are marked with CCACCA and rapidly degraded.</text>
</comment>
<comment type="catalytic activity">
    <reaction evidence="1">
        <text>a tRNA precursor + 2 CTP + ATP = a tRNA with a 3' CCA end + 3 diphosphate</text>
        <dbReference type="Rhea" id="RHEA:14433"/>
        <dbReference type="Rhea" id="RHEA-COMP:10465"/>
        <dbReference type="Rhea" id="RHEA-COMP:10468"/>
        <dbReference type="ChEBI" id="CHEBI:30616"/>
        <dbReference type="ChEBI" id="CHEBI:33019"/>
        <dbReference type="ChEBI" id="CHEBI:37563"/>
        <dbReference type="ChEBI" id="CHEBI:74896"/>
        <dbReference type="ChEBI" id="CHEBI:83071"/>
        <dbReference type="EC" id="2.7.7.72"/>
    </reaction>
</comment>
<comment type="catalytic activity">
    <reaction evidence="1">
        <text>a tRNA with a 3' CCA end + 2 CTP + ATP = a tRNA with a 3' CCACCA end + 3 diphosphate</text>
        <dbReference type="Rhea" id="RHEA:76235"/>
        <dbReference type="Rhea" id="RHEA-COMP:10468"/>
        <dbReference type="Rhea" id="RHEA-COMP:18655"/>
        <dbReference type="ChEBI" id="CHEBI:30616"/>
        <dbReference type="ChEBI" id="CHEBI:33019"/>
        <dbReference type="ChEBI" id="CHEBI:37563"/>
        <dbReference type="ChEBI" id="CHEBI:83071"/>
        <dbReference type="ChEBI" id="CHEBI:195187"/>
    </reaction>
    <physiologicalReaction direction="left-to-right" evidence="1">
        <dbReference type="Rhea" id="RHEA:76236"/>
    </physiologicalReaction>
</comment>
<comment type="cofactor">
    <cofactor evidence="1">
        <name>Mg(2+)</name>
        <dbReference type="ChEBI" id="CHEBI:18420"/>
    </cofactor>
    <text evidence="1">Magnesium is required for nucleotidyltransferase activity.</text>
</comment>
<comment type="cofactor">
    <cofactor evidence="1">
        <name>Ni(2+)</name>
        <dbReference type="ChEBI" id="CHEBI:49786"/>
    </cofactor>
    <text evidence="1">Nickel for phosphatase activity.</text>
</comment>
<comment type="subunit">
    <text evidence="1">Monomer. Can also form homodimers and oligomers.</text>
</comment>
<comment type="domain">
    <text evidence="1">Comprises two domains: an N-terminal domain containing the nucleotidyltransferase activity and a C-terminal HD domain associated with both phosphodiesterase and phosphatase activities.</text>
</comment>
<comment type="miscellaneous">
    <text evidence="1">A single active site specifically recognizes both ATP and CTP and is responsible for their addition.</text>
</comment>
<comment type="similarity">
    <text evidence="1">Belongs to the tRNA nucleotidyltransferase/poly(A) polymerase family. Bacterial CCA-adding enzyme type 1 subfamily.</text>
</comment>
<sequence length="415" mass="46508">MKSYLVGGAVRDALLGLPVKDKDWVVVGATPAEMLALGYQQVGKDFPVFLHPQTHEEYALARTERKSGQGYTGFTCYAAPDVTLEQDLQRRDLTINAIAQDDSGEFIDPYHGRDDLKARLLRHVSPAFNEDPLRVLRVARFAARYAHLGFRIAPETLSLMREMAENGELEHLTAERVWKETESALTTRNPQIYFLMLHECGALKVLFPEVDKLFGVPAPAKWHPEIDTGIHTLMTLAMAAMLSPAVDVRFAALCHDLGKGLTPPHLWPRHHGHGPAGVRLVAQVCERLRVPNDIRDLAKLVAEFHDLIHTFPILKPRTIVGLFDSIDAWRKPQRVEQIAITSEADVRGRTGFEAKDYPQARLLREAWEVARAVSPKEVVEAGFTGPAIREELTKRRIRAVAAWKEERCPQPAAEG</sequence>